<dbReference type="EC" id="4.1.2.4" evidence="1"/>
<dbReference type="EMBL" id="AP008971">
    <property type="protein sequence ID" value="BAG07823.1"/>
    <property type="molecule type" value="Genomic_DNA"/>
</dbReference>
<dbReference type="RefSeq" id="WP_012290384.1">
    <property type="nucleotide sequence ID" value="NC_010376.1"/>
</dbReference>
<dbReference type="SMR" id="B0S0N1"/>
<dbReference type="STRING" id="334413.FMG_0405"/>
<dbReference type="KEGG" id="fma:FMG_0405"/>
<dbReference type="eggNOG" id="COG0274">
    <property type="taxonomic scope" value="Bacteria"/>
</dbReference>
<dbReference type="HOGENOM" id="CLU_053595_0_1_9"/>
<dbReference type="UniPathway" id="UPA00002">
    <property type="reaction ID" value="UER00468"/>
</dbReference>
<dbReference type="Proteomes" id="UP000001319">
    <property type="component" value="Chromosome"/>
</dbReference>
<dbReference type="GO" id="GO:0005737">
    <property type="term" value="C:cytoplasm"/>
    <property type="evidence" value="ECO:0007669"/>
    <property type="project" value="UniProtKB-SubCell"/>
</dbReference>
<dbReference type="GO" id="GO:0004139">
    <property type="term" value="F:deoxyribose-phosphate aldolase activity"/>
    <property type="evidence" value="ECO:0007669"/>
    <property type="project" value="UniProtKB-UniRule"/>
</dbReference>
<dbReference type="GO" id="GO:0006018">
    <property type="term" value="P:2-deoxyribose 1-phosphate catabolic process"/>
    <property type="evidence" value="ECO:0007669"/>
    <property type="project" value="UniProtKB-UniRule"/>
</dbReference>
<dbReference type="GO" id="GO:0016052">
    <property type="term" value="P:carbohydrate catabolic process"/>
    <property type="evidence" value="ECO:0007669"/>
    <property type="project" value="TreeGrafter"/>
</dbReference>
<dbReference type="GO" id="GO:0009264">
    <property type="term" value="P:deoxyribonucleotide catabolic process"/>
    <property type="evidence" value="ECO:0007669"/>
    <property type="project" value="InterPro"/>
</dbReference>
<dbReference type="CDD" id="cd00959">
    <property type="entry name" value="DeoC"/>
    <property type="match status" value="1"/>
</dbReference>
<dbReference type="FunFam" id="3.20.20.70:FF:000044">
    <property type="entry name" value="Deoxyribose-phosphate aldolase"/>
    <property type="match status" value="1"/>
</dbReference>
<dbReference type="Gene3D" id="3.20.20.70">
    <property type="entry name" value="Aldolase class I"/>
    <property type="match status" value="1"/>
</dbReference>
<dbReference type="HAMAP" id="MF_00114">
    <property type="entry name" value="DeoC_type1"/>
    <property type="match status" value="1"/>
</dbReference>
<dbReference type="InterPro" id="IPR013785">
    <property type="entry name" value="Aldolase_TIM"/>
</dbReference>
<dbReference type="InterPro" id="IPR011343">
    <property type="entry name" value="DeoC"/>
</dbReference>
<dbReference type="InterPro" id="IPR002915">
    <property type="entry name" value="DeoC/FbaB/LacD_aldolase"/>
</dbReference>
<dbReference type="InterPro" id="IPR028581">
    <property type="entry name" value="DeoC_typeI"/>
</dbReference>
<dbReference type="NCBIfam" id="TIGR00126">
    <property type="entry name" value="deoC"/>
    <property type="match status" value="1"/>
</dbReference>
<dbReference type="PANTHER" id="PTHR10889">
    <property type="entry name" value="DEOXYRIBOSE-PHOSPHATE ALDOLASE"/>
    <property type="match status" value="1"/>
</dbReference>
<dbReference type="PANTHER" id="PTHR10889:SF1">
    <property type="entry name" value="DEOXYRIBOSE-PHOSPHATE ALDOLASE"/>
    <property type="match status" value="1"/>
</dbReference>
<dbReference type="Pfam" id="PF01791">
    <property type="entry name" value="DeoC"/>
    <property type="match status" value="1"/>
</dbReference>
<dbReference type="PIRSF" id="PIRSF001357">
    <property type="entry name" value="DeoC"/>
    <property type="match status" value="1"/>
</dbReference>
<dbReference type="SMART" id="SM01133">
    <property type="entry name" value="DeoC"/>
    <property type="match status" value="1"/>
</dbReference>
<dbReference type="SUPFAM" id="SSF51569">
    <property type="entry name" value="Aldolase"/>
    <property type="match status" value="1"/>
</dbReference>
<proteinExistence type="inferred from homology"/>
<name>DEOC_FINM2</name>
<reference key="1">
    <citation type="journal article" date="2008" name="DNA Res.">
        <title>Complete genome sequence of Finegoldia magna, an anaerobic opportunistic pathogen.</title>
        <authorList>
            <person name="Goto T."/>
            <person name="Yamashita A."/>
            <person name="Hirakawa H."/>
            <person name="Matsutani M."/>
            <person name="Todo K."/>
            <person name="Ohshima K."/>
            <person name="Toh H."/>
            <person name="Miyamoto K."/>
            <person name="Kuhara S."/>
            <person name="Hattori M."/>
            <person name="Shimizu T."/>
            <person name="Akimoto S."/>
        </authorList>
    </citation>
    <scope>NUCLEOTIDE SEQUENCE [LARGE SCALE GENOMIC DNA]</scope>
    <source>
        <strain>ATCC 29328 / DSM 20472 / WAL 2508</strain>
    </source>
</reference>
<comment type="function">
    <text evidence="1">Catalyzes a reversible aldol reaction between acetaldehyde and D-glyceraldehyde 3-phosphate to generate 2-deoxy-D-ribose 5-phosphate.</text>
</comment>
<comment type="catalytic activity">
    <reaction evidence="1">
        <text>2-deoxy-D-ribose 5-phosphate = D-glyceraldehyde 3-phosphate + acetaldehyde</text>
        <dbReference type="Rhea" id="RHEA:12821"/>
        <dbReference type="ChEBI" id="CHEBI:15343"/>
        <dbReference type="ChEBI" id="CHEBI:59776"/>
        <dbReference type="ChEBI" id="CHEBI:62877"/>
        <dbReference type="EC" id="4.1.2.4"/>
    </reaction>
</comment>
<comment type="pathway">
    <text evidence="1">Carbohydrate degradation; 2-deoxy-D-ribose 1-phosphate degradation; D-glyceraldehyde 3-phosphate and acetaldehyde from 2-deoxy-alpha-D-ribose 1-phosphate: step 2/2.</text>
</comment>
<comment type="subcellular location">
    <subcellularLocation>
        <location evidence="1">Cytoplasm</location>
    </subcellularLocation>
</comment>
<comment type="similarity">
    <text evidence="1">Belongs to the DeoC/FbaB aldolase family. DeoC type 1 subfamily.</text>
</comment>
<keyword id="KW-0963">Cytoplasm</keyword>
<keyword id="KW-0456">Lyase</keyword>
<keyword id="KW-1185">Reference proteome</keyword>
<keyword id="KW-0704">Schiff base</keyword>
<organism>
    <name type="scientific">Finegoldia magna (strain ATCC 29328 / DSM 20472 / WAL 2508)</name>
    <name type="common">Peptostreptococcus magnus</name>
    <dbReference type="NCBI Taxonomy" id="334413"/>
    <lineage>
        <taxon>Bacteria</taxon>
        <taxon>Bacillati</taxon>
        <taxon>Bacillota</taxon>
        <taxon>Tissierellia</taxon>
        <taxon>Tissierellales</taxon>
        <taxon>Peptoniphilaceae</taxon>
        <taxon>Finegoldia</taxon>
    </lineage>
</organism>
<protein>
    <recommendedName>
        <fullName evidence="1">Deoxyribose-phosphate aldolase</fullName>
        <shortName evidence="1">DERA</shortName>
        <ecNumber evidence="1">4.1.2.4</ecNumber>
    </recommendedName>
    <alternativeName>
        <fullName evidence="1">2-deoxy-D-ribose 5-phosphate aldolase</fullName>
    </alternativeName>
    <alternativeName>
        <fullName evidence="1">Phosphodeoxyriboaldolase</fullName>
        <shortName evidence="1">Deoxyriboaldolase</shortName>
    </alternativeName>
</protein>
<sequence>MELNKYIDHTLLKADATSADIKKICDEAIKYDFKSVCVNSCYTSLVKKSLENSSALVCTVVGFPLGAMSTKSKAFEAKTAIEDGADEIDMVINIGKLKEKDYDYVEKDIQAVRDATKGKVLKVIIETCLLTDEEKKKACEISVKCGADFVKTSTGFSTGGAKVEDVKLMKDTVADKAMVKASGGIHSREEALAMIENGADRIGASSGIKIVEG</sequence>
<feature type="chain" id="PRO_1000094846" description="Deoxyribose-phosphate aldolase">
    <location>
        <begin position="1"/>
        <end position="213"/>
    </location>
</feature>
<feature type="active site" description="Proton donor/acceptor" evidence="1">
    <location>
        <position position="89"/>
    </location>
</feature>
<feature type="active site" description="Schiff-base intermediate with acetaldehyde" evidence="1">
    <location>
        <position position="151"/>
    </location>
</feature>
<feature type="active site" description="Proton donor/acceptor" evidence="1">
    <location>
        <position position="180"/>
    </location>
</feature>
<evidence type="ECO:0000255" key="1">
    <source>
        <dbReference type="HAMAP-Rule" id="MF_00114"/>
    </source>
</evidence>
<accession>B0S0N1</accession>
<gene>
    <name evidence="1" type="primary">deoC</name>
    <name type="ordered locus">FMG_0405</name>
</gene>